<name>RL35_LIMF3</name>
<organism>
    <name type="scientific">Limosilactobacillus fermentum (strain NBRC 3956 / LMG 18251)</name>
    <name type="common">Lactobacillus fermentum</name>
    <dbReference type="NCBI Taxonomy" id="334390"/>
    <lineage>
        <taxon>Bacteria</taxon>
        <taxon>Bacillati</taxon>
        <taxon>Bacillota</taxon>
        <taxon>Bacilli</taxon>
        <taxon>Lactobacillales</taxon>
        <taxon>Lactobacillaceae</taxon>
        <taxon>Limosilactobacillus</taxon>
    </lineage>
</organism>
<keyword id="KW-1185">Reference proteome</keyword>
<keyword id="KW-0687">Ribonucleoprotein</keyword>
<keyword id="KW-0689">Ribosomal protein</keyword>
<sequence length="65" mass="7516">MPKMKTKSAAAKRFKRTAKGGFKSGNSFTSHRFHGKTKKQRRQLRGLSMMDKSNVKRYKKMIPAK</sequence>
<protein>
    <recommendedName>
        <fullName evidence="1">Large ribosomal subunit protein bL35</fullName>
    </recommendedName>
    <alternativeName>
        <fullName evidence="3">50S ribosomal protein L35</fullName>
    </alternativeName>
</protein>
<evidence type="ECO:0000255" key="1">
    <source>
        <dbReference type="HAMAP-Rule" id="MF_00514"/>
    </source>
</evidence>
<evidence type="ECO:0000256" key="2">
    <source>
        <dbReference type="SAM" id="MobiDB-lite"/>
    </source>
</evidence>
<evidence type="ECO:0000305" key="3"/>
<feature type="chain" id="PRO_1000127367" description="Large ribosomal subunit protein bL35">
    <location>
        <begin position="1"/>
        <end position="65"/>
    </location>
</feature>
<feature type="region of interest" description="Disordered" evidence="2">
    <location>
        <begin position="1"/>
        <end position="65"/>
    </location>
</feature>
<feature type="compositionally biased region" description="Basic residues" evidence="2">
    <location>
        <begin position="1"/>
        <end position="18"/>
    </location>
</feature>
<feature type="compositionally biased region" description="Basic residues" evidence="2">
    <location>
        <begin position="31"/>
        <end position="44"/>
    </location>
</feature>
<feature type="compositionally biased region" description="Basic residues" evidence="2">
    <location>
        <begin position="55"/>
        <end position="65"/>
    </location>
</feature>
<accession>B2GDB4</accession>
<reference key="1">
    <citation type="journal article" date="2008" name="DNA Res.">
        <title>Comparative genome analysis of Lactobacillus reuteri and Lactobacillus fermentum reveal a genomic island for reuterin and cobalamin production.</title>
        <authorList>
            <person name="Morita H."/>
            <person name="Toh H."/>
            <person name="Fukuda S."/>
            <person name="Horikawa H."/>
            <person name="Oshima K."/>
            <person name="Suzuki T."/>
            <person name="Murakami M."/>
            <person name="Hisamatsu S."/>
            <person name="Kato Y."/>
            <person name="Takizawa T."/>
            <person name="Fukuoka H."/>
            <person name="Yoshimura T."/>
            <person name="Itoh K."/>
            <person name="O'Sullivan D.J."/>
            <person name="McKay L.L."/>
            <person name="Ohno H."/>
            <person name="Kikuchi J."/>
            <person name="Masaoka T."/>
            <person name="Hattori M."/>
        </authorList>
    </citation>
    <scope>NUCLEOTIDE SEQUENCE [LARGE SCALE GENOMIC DNA]</scope>
    <source>
        <strain>NBRC 3956 / LMG 18251</strain>
    </source>
</reference>
<comment type="similarity">
    <text evidence="1">Belongs to the bacterial ribosomal protein bL35 family.</text>
</comment>
<dbReference type="EMBL" id="AP008937">
    <property type="protein sequence ID" value="BAG27646.1"/>
    <property type="molecule type" value="Genomic_DNA"/>
</dbReference>
<dbReference type="RefSeq" id="WP_003683702.1">
    <property type="nucleotide sequence ID" value="NC_010610.1"/>
</dbReference>
<dbReference type="SMR" id="B2GDB4"/>
<dbReference type="GeneID" id="83714240"/>
<dbReference type="KEGG" id="lfe:LAF_1310"/>
<dbReference type="eggNOG" id="COG0291">
    <property type="taxonomic scope" value="Bacteria"/>
</dbReference>
<dbReference type="HOGENOM" id="CLU_169643_3_1_9"/>
<dbReference type="Proteomes" id="UP000001697">
    <property type="component" value="Chromosome"/>
</dbReference>
<dbReference type="GO" id="GO:0022625">
    <property type="term" value="C:cytosolic large ribosomal subunit"/>
    <property type="evidence" value="ECO:0007669"/>
    <property type="project" value="TreeGrafter"/>
</dbReference>
<dbReference type="GO" id="GO:0003735">
    <property type="term" value="F:structural constituent of ribosome"/>
    <property type="evidence" value="ECO:0007669"/>
    <property type="project" value="InterPro"/>
</dbReference>
<dbReference type="GO" id="GO:0006412">
    <property type="term" value="P:translation"/>
    <property type="evidence" value="ECO:0007669"/>
    <property type="project" value="UniProtKB-UniRule"/>
</dbReference>
<dbReference type="FunFam" id="4.10.410.60:FF:000001">
    <property type="entry name" value="50S ribosomal protein L35"/>
    <property type="match status" value="1"/>
</dbReference>
<dbReference type="Gene3D" id="4.10.410.60">
    <property type="match status" value="1"/>
</dbReference>
<dbReference type="HAMAP" id="MF_00514">
    <property type="entry name" value="Ribosomal_bL35"/>
    <property type="match status" value="1"/>
</dbReference>
<dbReference type="InterPro" id="IPR001706">
    <property type="entry name" value="Ribosomal_bL35"/>
</dbReference>
<dbReference type="InterPro" id="IPR021137">
    <property type="entry name" value="Ribosomal_bL35-like"/>
</dbReference>
<dbReference type="InterPro" id="IPR018265">
    <property type="entry name" value="Ribosomal_bL35_CS"/>
</dbReference>
<dbReference type="InterPro" id="IPR037229">
    <property type="entry name" value="Ribosomal_bL35_sf"/>
</dbReference>
<dbReference type="NCBIfam" id="TIGR00001">
    <property type="entry name" value="rpmI_bact"/>
    <property type="match status" value="1"/>
</dbReference>
<dbReference type="PANTHER" id="PTHR33343">
    <property type="entry name" value="54S RIBOSOMAL PROTEIN BL35M"/>
    <property type="match status" value="1"/>
</dbReference>
<dbReference type="PANTHER" id="PTHR33343:SF1">
    <property type="entry name" value="LARGE RIBOSOMAL SUBUNIT PROTEIN BL35M"/>
    <property type="match status" value="1"/>
</dbReference>
<dbReference type="Pfam" id="PF01632">
    <property type="entry name" value="Ribosomal_L35p"/>
    <property type="match status" value="1"/>
</dbReference>
<dbReference type="PRINTS" id="PR00064">
    <property type="entry name" value="RIBOSOMALL35"/>
</dbReference>
<dbReference type="SUPFAM" id="SSF143034">
    <property type="entry name" value="L35p-like"/>
    <property type="match status" value="1"/>
</dbReference>
<dbReference type="PROSITE" id="PS00936">
    <property type="entry name" value="RIBOSOMAL_L35"/>
    <property type="match status" value="1"/>
</dbReference>
<proteinExistence type="inferred from homology"/>
<gene>
    <name evidence="1" type="primary">rpmI</name>
    <name type="ordered locus">LAF_1310</name>
</gene>